<gene>
    <name type="primary">nuoE</name>
    <name type="ordered locus">RBE_0392</name>
</gene>
<keyword id="KW-0001">2Fe-2S</keyword>
<keyword id="KW-0408">Iron</keyword>
<keyword id="KW-0411">Iron-sulfur</keyword>
<keyword id="KW-0479">Metal-binding</keyword>
<keyword id="KW-0520">NAD</keyword>
<keyword id="KW-0874">Quinone</keyword>
<keyword id="KW-1278">Translocase</keyword>
<organism>
    <name type="scientific">Rickettsia bellii (strain RML369-C)</name>
    <dbReference type="NCBI Taxonomy" id="336407"/>
    <lineage>
        <taxon>Bacteria</taxon>
        <taxon>Pseudomonadati</taxon>
        <taxon>Pseudomonadota</taxon>
        <taxon>Alphaproteobacteria</taxon>
        <taxon>Rickettsiales</taxon>
        <taxon>Rickettsiaceae</taxon>
        <taxon>Rickettsieae</taxon>
        <taxon>Rickettsia</taxon>
        <taxon>belli group</taxon>
    </lineage>
</organism>
<protein>
    <recommendedName>
        <fullName>NADH-quinone oxidoreductase subunit E</fullName>
        <ecNumber>7.1.1.-</ecNumber>
    </recommendedName>
    <alternativeName>
        <fullName>NADH dehydrogenase I subunit E</fullName>
    </alternativeName>
    <alternativeName>
        <fullName>NDH-1 subunit E</fullName>
    </alternativeName>
</protein>
<evidence type="ECO:0000250" key="1"/>
<evidence type="ECO:0000255" key="2"/>
<evidence type="ECO:0000305" key="3"/>
<feature type="chain" id="PRO_0000287854" description="NADH-quinone oxidoreductase subunit E">
    <location>
        <begin position="1"/>
        <end position="167"/>
    </location>
</feature>
<feature type="binding site" evidence="2">
    <location>
        <position position="91"/>
    </location>
    <ligand>
        <name>[2Fe-2S] cluster</name>
        <dbReference type="ChEBI" id="CHEBI:190135"/>
    </ligand>
</feature>
<feature type="binding site" evidence="2">
    <location>
        <position position="96"/>
    </location>
    <ligand>
        <name>[2Fe-2S] cluster</name>
        <dbReference type="ChEBI" id="CHEBI:190135"/>
    </ligand>
</feature>
<feature type="binding site" evidence="2">
    <location>
        <position position="132"/>
    </location>
    <ligand>
        <name>[2Fe-2S] cluster</name>
        <dbReference type="ChEBI" id="CHEBI:190135"/>
    </ligand>
</feature>
<feature type="binding site" evidence="2">
    <location>
        <position position="136"/>
    </location>
    <ligand>
        <name>[2Fe-2S] cluster</name>
        <dbReference type="ChEBI" id="CHEBI:190135"/>
    </ligand>
</feature>
<name>NUOE_RICBR</name>
<proteinExistence type="inferred from homology"/>
<dbReference type="EC" id="7.1.1.-"/>
<dbReference type="EMBL" id="CP000087">
    <property type="protein sequence ID" value="ABE04473.1"/>
    <property type="molecule type" value="Genomic_DNA"/>
</dbReference>
<dbReference type="RefSeq" id="WP_011477082.1">
    <property type="nucleotide sequence ID" value="NC_007940.1"/>
</dbReference>
<dbReference type="SMR" id="Q1RJJ1"/>
<dbReference type="KEGG" id="rbe:RBE_0392"/>
<dbReference type="eggNOG" id="COG1905">
    <property type="taxonomic scope" value="Bacteria"/>
</dbReference>
<dbReference type="HOGENOM" id="CLU_054362_2_0_5"/>
<dbReference type="OrthoDB" id="9807941at2"/>
<dbReference type="Proteomes" id="UP000001951">
    <property type="component" value="Chromosome"/>
</dbReference>
<dbReference type="GO" id="GO:0051537">
    <property type="term" value="F:2 iron, 2 sulfur cluster binding"/>
    <property type="evidence" value="ECO:0007669"/>
    <property type="project" value="UniProtKB-KW"/>
</dbReference>
<dbReference type="GO" id="GO:0046872">
    <property type="term" value="F:metal ion binding"/>
    <property type="evidence" value="ECO:0007669"/>
    <property type="project" value="UniProtKB-KW"/>
</dbReference>
<dbReference type="GO" id="GO:0003954">
    <property type="term" value="F:NADH dehydrogenase activity"/>
    <property type="evidence" value="ECO:0007669"/>
    <property type="project" value="TreeGrafter"/>
</dbReference>
<dbReference type="GO" id="GO:0048038">
    <property type="term" value="F:quinone binding"/>
    <property type="evidence" value="ECO:0007669"/>
    <property type="project" value="UniProtKB-KW"/>
</dbReference>
<dbReference type="CDD" id="cd03064">
    <property type="entry name" value="TRX_Fd_NuoE"/>
    <property type="match status" value="1"/>
</dbReference>
<dbReference type="FunFam" id="3.40.30.10:FF:000022">
    <property type="entry name" value="NADH dehydrogenase flavoprotein 2, mitochondrial"/>
    <property type="match status" value="1"/>
</dbReference>
<dbReference type="FunFam" id="1.10.10.1590:FF:000001">
    <property type="entry name" value="NADH-quinone oxidoreductase subunit E"/>
    <property type="match status" value="1"/>
</dbReference>
<dbReference type="Gene3D" id="3.40.30.10">
    <property type="entry name" value="Glutaredoxin"/>
    <property type="match status" value="1"/>
</dbReference>
<dbReference type="Gene3D" id="1.10.10.1590">
    <property type="entry name" value="NADH-quinone oxidoreductase subunit E"/>
    <property type="match status" value="1"/>
</dbReference>
<dbReference type="InterPro" id="IPR002023">
    <property type="entry name" value="NuoE-like"/>
</dbReference>
<dbReference type="InterPro" id="IPR042128">
    <property type="entry name" value="NuoE_dom"/>
</dbReference>
<dbReference type="InterPro" id="IPR041921">
    <property type="entry name" value="NuoE_N"/>
</dbReference>
<dbReference type="InterPro" id="IPR036249">
    <property type="entry name" value="Thioredoxin-like_sf"/>
</dbReference>
<dbReference type="NCBIfam" id="TIGR01958">
    <property type="entry name" value="nuoE_fam"/>
    <property type="match status" value="1"/>
</dbReference>
<dbReference type="NCBIfam" id="NF005725">
    <property type="entry name" value="PRK07539.1-5"/>
    <property type="match status" value="1"/>
</dbReference>
<dbReference type="PANTHER" id="PTHR10371:SF3">
    <property type="entry name" value="NADH DEHYDROGENASE [UBIQUINONE] FLAVOPROTEIN 2, MITOCHONDRIAL"/>
    <property type="match status" value="1"/>
</dbReference>
<dbReference type="PANTHER" id="PTHR10371">
    <property type="entry name" value="NADH DEHYDROGENASE UBIQUINONE FLAVOPROTEIN 2, MITOCHONDRIAL"/>
    <property type="match status" value="1"/>
</dbReference>
<dbReference type="Pfam" id="PF01257">
    <property type="entry name" value="2Fe-2S_thioredx"/>
    <property type="match status" value="1"/>
</dbReference>
<dbReference type="PIRSF" id="PIRSF000216">
    <property type="entry name" value="NADH_DH_24kDa"/>
    <property type="match status" value="1"/>
</dbReference>
<dbReference type="SUPFAM" id="SSF52833">
    <property type="entry name" value="Thioredoxin-like"/>
    <property type="match status" value="1"/>
</dbReference>
<dbReference type="PROSITE" id="PS01099">
    <property type="entry name" value="COMPLEX1_24K"/>
    <property type="match status" value="1"/>
</dbReference>
<accession>Q1RJJ1</accession>
<reference key="1">
    <citation type="journal article" date="2006" name="PLoS Genet.">
        <title>Genome sequence of Rickettsia bellii illuminates the role of amoebae in gene exchanges between intracellular pathogens.</title>
        <authorList>
            <person name="Ogata H."/>
            <person name="La Scola B."/>
            <person name="Audic S."/>
            <person name="Renesto P."/>
            <person name="Blanc G."/>
            <person name="Robert C."/>
            <person name="Fournier P.-E."/>
            <person name="Claverie J.-M."/>
            <person name="Raoult D."/>
        </authorList>
    </citation>
    <scope>NUCLEOTIDE SEQUENCE [LARGE SCALE GENOMIC DNA]</scope>
    <source>
        <strain>RML369-C</strain>
    </source>
</reference>
<sequence>MNTKITNFSFDKKNLSLAEDIIKKYPPEGKRSAILPLLDLAQRQNGGWLPVPAIEYVANMLEMPYMRAYEVATFYTMFNLKPVGKNHIQVCTTTPCWLRGSDDIMKTCKEKLGIKDEEVTKDQKFSLIEIECLGACVNAPVVQINDDYYEDLTPEKMEAIIDKLRND</sequence>
<comment type="function">
    <text evidence="1">NDH-1 shuttles electrons from NADH, via FMN and iron-sulfur (Fe-S) centers, to quinones in the respiratory chain. Couples the redox reaction to proton translocation (for every two electrons transferred, four hydrogen ions are translocated across the cytoplasmic membrane), and thus conserves the redox energy in a proton gradient (By similarity).</text>
</comment>
<comment type="catalytic activity">
    <reaction>
        <text>a quinone + NADH + 5 H(+)(in) = a quinol + NAD(+) + 4 H(+)(out)</text>
        <dbReference type="Rhea" id="RHEA:57888"/>
        <dbReference type="ChEBI" id="CHEBI:15378"/>
        <dbReference type="ChEBI" id="CHEBI:24646"/>
        <dbReference type="ChEBI" id="CHEBI:57540"/>
        <dbReference type="ChEBI" id="CHEBI:57945"/>
        <dbReference type="ChEBI" id="CHEBI:132124"/>
    </reaction>
</comment>
<comment type="cofactor">
    <cofactor evidence="3">
        <name>[2Fe-2S] cluster</name>
        <dbReference type="ChEBI" id="CHEBI:190135"/>
    </cofactor>
    <text evidence="3">Binds 1 [2Fe-2S] cluster.</text>
</comment>
<comment type="similarity">
    <text evidence="3">Belongs to the complex I 24 kDa subunit family.</text>
</comment>